<gene>
    <name type="primary">Iqca1</name>
    <name evidence="1" type="synonym">Drc11</name>
    <name type="synonym">Iqca</name>
</gene>
<proteinExistence type="evidence at transcript level"/>
<protein>
    <recommendedName>
        <fullName evidence="1">Dynein regulatory complex protein 11</fullName>
    </recommendedName>
    <alternativeName>
        <fullName>IQ and AAA domain-containing protein 1</fullName>
    </alternativeName>
</protein>
<dbReference type="EMBL" id="AK015512">
    <property type="protein sequence ID" value="BAB29877.1"/>
    <property type="molecule type" value="mRNA"/>
</dbReference>
<dbReference type="EMBL" id="AK016353">
    <property type="protein sequence ID" value="BAB30202.1"/>
    <property type="molecule type" value="mRNA"/>
</dbReference>
<dbReference type="EMBL" id="AK139726">
    <property type="protein sequence ID" value="BAE24115.1"/>
    <property type="molecule type" value="mRNA"/>
</dbReference>
<dbReference type="EMBL" id="AC110261">
    <property type="status" value="NOT_ANNOTATED_CDS"/>
    <property type="molecule type" value="Genomic_DNA"/>
</dbReference>
<dbReference type="EMBL" id="AC124227">
    <property type="status" value="NOT_ANNOTATED_CDS"/>
    <property type="molecule type" value="Genomic_DNA"/>
</dbReference>
<dbReference type="SMR" id="Q9CUL5"/>
<dbReference type="BioGRID" id="217079">
    <property type="interactions" value="4"/>
</dbReference>
<dbReference type="FunCoup" id="Q9CUL5">
    <property type="interactions" value="20"/>
</dbReference>
<dbReference type="STRING" id="10090.ENSMUSP00000108717"/>
<dbReference type="iPTMnet" id="Q9CUL5"/>
<dbReference type="PhosphoSitePlus" id="Q9CUL5"/>
<dbReference type="jPOST" id="Q9CUL5"/>
<dbReference type="PaxDb" id="10090-ENSMUSP00000108717"/>
<dbReference type="ProteomicsDB" id="268986">
    <molecule id="Q9CUL5-1"/>
</dbReference>
<dbReference type="ProteomicsDB" id="268987">
    <molecule id="Q9CUL5-2"/>
</dbReference>
<dbReference type="ProteomicsDB" id="268988">
    <molecule id="Q9CUL5-3"/>
</dbReference>
<dbReference type="Antibodypedia" id="34467">
    <property type="antibodies" value="81 antibodies from 14 providers"/>
</dbReference>
<dbReference type="Ensembl" id="ENSMUST00000212394.2">
    <molecule id="Q9CUL5-1"/>
    <property type="protein sequence ID" value="ENSMUSP00000148643.2"/>
    <property type="gene ID" value="ENSMUSG00000026301.17"/>
</dbReference>
<dbReference type="UCSC" id="uc007bzf.2">
    <molecule id="Q9CUL5-3"/>
    <property type="organism name" value="mouse"/>
</dbReference>
<dbReference type="AGR" id="MGI:1922168"/>
<dbReference type="MGI" id="MGI:1922168">
    <property type="gene designation" value="Iqca1"/>
</dbReference>
<dbReference type="VEuPathDB" id="HostDB:ENSMUSG00000026301"/>
<dbReference type="eggNOG" id="ENOG502QTPP">
    <property type="taxonomic scope" value="Eukaryota"/>
</dbReference>
<dbReference type="GeneTree" id="ENSGT00940000154067"/>
<dbReference type="InParanoid" id="Q9CUL5"/>
<dbReference type="OrthoDB" id="3046016at2759"/>
<dbReference type="PhylomeDB" id="Q9CUL5"/>
<dbReference type="ChiTaRS" id="Iqca">
    <property type="organism name" value="mouse"/>
</dbReference>
<dbReference type="PRO" id="PR:Q9CUL5"/>
<dbReference type="Proteomes" id="UP000000589">
    <property type="component" value="Chromosome 1"/>
</dbReference>
<dbReference type="RNAct" id="Q9CUL5">
    <property type="molecule type" value="protein"/>
</dbReference>
<dbReference type="Bgee" id="ENSMUSG00000026301">
    <property type="expression patterns" value="Expressed in animal zygote and 63 other cell types or tissues"/>
</dbReference>
<dbReference type="ExpressionAtlas" id="Q9CUL5">
    <property type="expression patterns" value="baseline and differential"/>
</dbReference>
<dbReference type="GO" id="GO:0005737">
    <property type="term" value="C:cytoplasm"/>
    <property type="evidence" value="ECO:0007669"/>
    <property type="project" value="UniProtKB-KW"/>
</dbReference>
<dbReference type="GO" id="GO:0005856">
    <property type="term" value="C:cytoskeleton"/>
    <property type="evidence" value="ECO:0007669"/>
    <property type="project" value="UniProtKB-KW"/>
</dbReference>
<dbReference type="GO" id="GO:0031514">
    <property type="term" value="C:motile cilium"/>
    <property type="evidence" value="ECO:0007669"/>
    <property type="project" value="UniProtKB-KW"/>
</dbReference>
<dbReference type="GO" id="GO:0005524">
    <property type="term" value="F:ATP binding"/>
    <property type="evidence" value="ECO:0007669"/>
    <property type="project" value="UniProtKB-KW"/>
</dbReference>
<dbReference type="GO" id="GO:0016887">
    <property type="term" value="F:ATP hydrolysis activity"/>
    <property type="evidence" value="ECO:0007669"/>
    <property type="project" value="InterPro"/>
</dbReference>
<dbReference type="FunFam" id="1.10.8.60:FF:000064">
    <property type="entry name" value="IQ motif containing with AAA domain 1"/>
    <property type="match status" value="1"/>
</dbReference>
<dbReference type="Gene3D" id="1.10.8.60">
    <property type="match status" value="1"/>
</dbReference>
<dbReference type="Gene3D" id="3.40.50.300">
    <property type="entry name" value="P-loop containing nucleotide triphosphate hydrolases"/>
    <property type="match status" value="1"/>
</dbReference>
<dbReference type="InterPro" id="IPR003593">
    <property type="entry name" value="AAA+_ATPase"/>
</dbReference>
<dbReference type="InterPro" id="IPR003959">
    <property type="entry name" value="ATPase_AAA_core"/>
</dbReference>
<dbReference type="InterPro" id="IPR052267">
    <property type="entry name" value="N-DRC_Component"/>
</dbReference>
<dbReference type="InterPro" id="IPR027417">
    <property type="entry name" value="P-loop_NTPase"/>
</dbReference>
<dbReference type="PANTHER" id="PTHR14690:SF8">
    <property type="entry name" value="DYNEIN REGULATORY COMPLEX PROTEIN 11"/>
    <property type="match status" value="1"/>
</dbReference>
<dbReference type="PANTHER" id="PTHR14690">
    <property type="entry name" value="IQ MOTIF CONTAINING WITH AAA DOMAIN 1"/>
    <property type="match status" value="1"/>
</dbReference>
<dbReference type="Pfam" id="PF00004">
    <property type="entry name" value="AAA"/>
    <property type="match status" value="1"/>
</dbReference>
<dbReference type="SMART" id="SM00382">
    <property type="entry name" value="AAA"/>
    <property type="match status" value="1"/>
</dbReference>
<dbReference type="SUPFAM" id="SSF52540">
    <property type="entry name" value="P-loop containing nucleoside triphosphate hydrolases"/>
    <property type="match status" value="1"/>
</dbReference>
<evidence type="ECO:0000250" key="1">
    <source>
        <dbReference type="UniProtKB" id="A8IHT2"/>
    </source>
</evidence>
<evidence type="ECO:0000255" key="2"/>
<evidence type="ECO:0000256" key="3">
    <source>
        <dbReference type="SAM" id="MobiDB-lite"/>
    </source>
</evidence>
<evidence type="ECO:0000303" key="4">
    <source>
    </source>
</evidence>
<evidence type="ECO:0000305" key="5"/>
<organism>
    <name type="scientific">Mus musculus</name>
    <name type="common">Mouse</name>
    <dbReference type="NCBI Taxonomy" id="10090"/>
    <lineage>
        <taxon>Eukaryota</taxon>
        <taxon>Metazoa</taxon>
        <taxon>Chordata</taxon>
        <taxon>Craniata</taxon>
        <taxon>Vertebrata</taxon>
        <taxon>Euteleostomi</taxon>
        <taxon>Mammalia</taxon>
        <taxon>Eutheria</taxon>
        <taxon>Euarchontoglires</taxon>
        <taxon>Glires</taxon>
        <taxon>Rodentia</taxon>
        <taxon>Myomorpha</taxon>
        <taxon>Muroidea</taxon>
        <taxon>Muridae</taxon>
        <taxon>Murinae</taxon>
        <taxon>Mus</taxon>
        <taxon>Mus</taxon>
    </lineage>
</organism>
<reference key="1">
    <citation type="journal article" date="2005" name="Science">
        <title>The transcriptional landscape of the mammalian genome.</title>
        <authorList>
            <person name="Carninci P."/>
            <person name="Kasukawa T."/>
            <person name="Katayama S."/>
            <person name="Gough J."/>
            <person name="Frith M.C."/>
            <person name="Maeda N."/>
            <person name="Oyama R."/>
            <person name="Ravasi T."/>
            <person name="Lenhard B."/>
            <person name="Wells C."/>
            <person name="Kodzius R."/>
            <person name="Shimokawa K."/>
            <person name="Bajic V.B."/>
            <person name="Brenner S.E."/>
            <person name="Batalov S."/>
            <person name="Forrest A.R."/>
            <person name="Zavolan M."/>
            <person name="Davis M.J."/>
            <person name="Wilming L.G."/>
            <person name="Aidinis V."/>
            <person name="Allen J.E."/>
            <person name="Ambesi-Impiombato A."/>
            <person name="Apweiler R."/>
            <person name="Aturaliya R.N."/>
            <person name="Bailey T.L."/>
            <person name="Bansal M."/>
            <person name="Baxter L."/>
            <person name="Beisel K.W."/>
            <person name="Bersano T."/>
            <person name="Bono H."/>
            <person name="Chalk A.M."/>
            <person name="Chiu K.P."/>
            <person name="Choudhary V."/>
            <person name="Christoffels A."/>
            <person name="Clutterbuck D.R."/>
            <person name="Crowe M.L."/>
            <person name="Dalla E."/>
            <person name="Dalrymple B.P."/>
            <person name="de Bono B."/>
            <person name="Della Gatta G."/>
            <person name="di Bernardo D."/>
            <person name="Down T."/>
            <person name="Engstrom P."/>
            <person name="Fagiolini M."/>
            <person name="Faulkner G."/>
            <person name="Fletcher C.F."/>
            <person name="Fukushima T."/>
            <person name="Furuno M."/>
            <person name="Futaki S."/>
            <person name="Gariboldi M."/>
            <person name="Georgii-Hemming P."/>
            <person name="Gingeras T.R."/>
            <person name="Gojobori T."/>
            <person name="Green R.E."/>
            <person name="Gustincich S."/>
            <person name="Harbers M."/>
            <person name="Hayashi Y."/>
            <person name="Hensch T.K."/>
            <person name="Hirokawa N."/>
            <person name="Hill D."/>
            <person name="Huminiecki L."/>
            <person name="Iacono M."/>
            <person name="Ikeo K."/>
            <person name="Iwama A."/>
            <person name="Ishikawa T."/>
            <person name="Jakt M."/>
            <person name="Kanapin A."/>
            <person name="Katoh M."/>
            <person name="Kawasawa Y."/>
            <person name="Kelso J."/>
            <person name="Kitamura H."/>
            <person name="Kitano H."/>
            <person name="Kollias G."/>
            <person name="Krishnan S.P."/>
            <person name="Kruger A."/>
            <person name="Kummerfeld S.K."/>
            <person name="Kurochkin I.V."/>
            <person name="Lareau L.F."/>
            <person name="Lazarevic D."/>
            <person name="Lipovich L."/>
            <person name="Liu J."/>
            <person name="Liuni S."/>
            <person name="McWilliam S."/>
            <person name="Madan Babu M."/>
            <person name="Madera M."/>
            <person name="Marchionni L."/>
            <person name="Matsuda H."/>
            <person name="Matsuzawa S."/>
            <person name="Miki H."/>
            <person name="Mignone F."/>
            <person name="Miyake S."/>
            <person name="Morris K."/>
            <person name="Mottagui-Tabar S."/>
            <person name="Mulder N."/>
            <person name="Nakano N."/>
            <person name="Nakauchi H."/>
            <person name="Ng P."/>
            <person name="Nilsson R."/>
            <person name="Nishiguchi S."/>
            <person name="Nishikawa S."/>
            <person name="Nori F."/>
            <person name="Ohara O."/>
            <person name="Okazaki Y."/>
            <person name="Orlando V."/>
            <person name="Pang K.C."/>
            <person name="Pavan W.J."/>
            <person name="Pavesi G."/>
            <person name="Pesole G."/>
            <person name="Petrovsky N."/>
            <person name="Piazza S."/>
            <person name="Reed J."/>
            <person name="Reid J.F."/>
            <person name="Ring B.Z."/>
            <person name="Ringwald M."/>
            <person name="Rost B."/>
            <person name="Ruan Y."/>
            <person name="Salzberg S.L."/>
            <person name="Sandelin A."/>
            <person name="Schneider C."/>
            <person name="Schoenbach C."/>
            <person name="Sekiguchi K."/>
            <person name="Semple C.A."/>
            <person name="Seno S."/>
            <person name="Sessa L."/>
            <person name="Sheng Y."/>
            <person name="Shibata Y."/>
            <person name="Shimada H."/>
            <person name="Shimada K."/>
            <person name="Silva D."/>
            <person name="Sinclair B."/>
            <person name="Sperling S."/>
            <person name="Stupka E."/>
            <person name="Sugiura K."/>
            <person name="Sultana R."/>
            <person name="Takenaka Y."/>
            <person name="Taki K."/>
            <person name="Tammoja K."/>
            <person name="Tan S.L."/>
            <person name="Tang S."/>
            <person name="Taylor M.S."/>
            <person name="Tegner J."/>
            <person name="Teichmann S.A."/>
            <person name="Ueda H.R."/>
            <person name="van Nimwegen E."/>
            <person name="Verardo R."/>
            <person name="Wei C.L."/>
            <person name="Yagi K."/>
            <person name="Yamanishi H."/>
            <person name="Zabarovsky E."/>
            <person name="Zhu S."/>
            <person name="Zimmer A."/>
            <person name="Hide W."/>
            <person name="Bult C."/>
            <person name="Grimmond S.M."/>
            <person name="Teasdale R.D."/>
            <person name="Liu E.T."/>
            <person name="Brusic V."/>
            <person name="Quackenbush J."/>
            <person name="Wahlestedt C."/>
            <person name="Mattick J.S."/>
            <person name="Hume D.A."/>
            <person name="Kai C."/>
            <person name="Sasaki D."/>
            <person name="Tomaru Y."/>
            <person name="Fukuda S."/>
            <person name="Kanamori-Katayama M."/>
            <person name="Suzuki M."/>
            <person name="Aoki J."/>
            <person name="Arakawa T."/>
            <person name="Iida J."/>
            <person name="Imamura K."/>
            <person name="Itoh M."/>
            <person name="Kato T."/>
            <person name="Kawaji H."/>
            <person name="Kawagashira N."/>
            <person name="Kawashima T."/>
            <person name="Kojima M."/>
            <person name="Kondo S."/>
            <person name="Konno H."/>
            <person name="Nakano K."/>
            <person name="Ninomiya N."/>
            <person name="Nishio T."/>
            <person name="Okada M."/>
            <person name="Plessy C."/>
            <person name="Shibata K."/>
            <person name="Shiraki T."/>
            <person name="Suzuki S."/>
            <person name="Tagami M."/>
            <person name="Waki K."/>
            <person name="Watahiki A."/>
            <person name="Okamura-Oho Y."/>
            <person name="Suzuki H."/>
            <person name="Kawai J."/>
            <person name="Hayashizaki Y."/>
        </authorList>
    </citation>
    <scope>NUCLEOTIDE SEQUENCE [LARGE SCALE MRNA] (ISOFORM 2)</scope>
    <scope>NUCLEOTIDE SEQUENCE [LARGE SCALE MRNA] OF 1-353 (ISOFORM 1)</scope>
    <source>
        <strain>C57BL/6J</strain>
        <tissue>Egg</tissue>
        <tissue>Testis</tissue>
    </source>
</reference>
<reference key="2">
    <citation type="journal article" date="2009" name="PLoS Biol.">
        <title>Lineage-specific biology revealed by a finished genome assembly of the mouse.</title>
        <authorList>
            <person name="Church D.M."/>
            <person name="Goodstadt L."/>
            <person name="Hillier L.W."/>
            <person name="Zody M.C."/>
            <person name="Goldstein S."/>
            <person name="She X."/>
            <person name="Bult C.J."/>
            <person name="Agarwala R."/>
            <person name="Cherry J.L."/>
            <person name="DiCuccio M."/>
            <person name="Hlavina W."/>
            <person name="Kapustin Y."/>
            <person name="Meric P."/>
            <person name="Maglott D."/>
            <person name="Birtle Z."/>
            <person name="Marques A.C."/>
            <person name="Graves T."/>
            <person name="Zhou S."/>
            <person name="Teague B."/>
            <person name="Potamousis K."/>
            <person name="Churas C."/>
            <person name="Place M."/>
            <person name="Herschleb J."/>
            <person name="Runnheim R."/>
            <person name="Forrest D."/>
            <person name="Amos-Landgraf J."/>
            <person name="Schwartz D.C."/>
            <person name="Cheng Z."/>
            <person name="Lindblad-Toh K."/>
            <person name="Eichler E.E."/>
            <person name="Ponting C.P."/>
        </authorList>
    </citation>
    <scope>NUCLEOTIDE SEQUENCE [LARGE SCALE GENOMIC DNA]</scope>
    <source>
        <strain>C57BL/6J</strain>
    </source>
</reference>
<comment type="function">
    <text evidence="1">Component of the nexin-dynein regulatory complex (N-DRC), a key regulator of ciliary/flagellar motility which maintains the alignment and integrity of the distal axoneme and regulates microtubule sliding in motile axonemes.</text>
</comment>
<comment type="subunit">
    <text evidence="1">Component of the nexin-dynein regulatory complex (N-DRC).</text>
</comment>
<comment type="subcellular location">
    <subcellularLocation>
        <location evidence="1">Cytoplasm</location>
        <location evidence="1">Cytoskeleton</location>
        <location evidence="1">Flagellum axoneme</location>
    </subcellularLocation>
</comment>
<comment type="alternative products">
    <event type="alternative splicing"/>
    <isoform>
        <id>Q9CUL5-1</id>
        <name>1</name>
        <sequence type="displayed"/>
    </isoform>
    <isoform>
        <id>Q9CUL5-2</id>
        <name>2</name>
        <sequence type="described" ref="VSP_024334 VSP_024335"/>
    </isoform>
    <isoform>
        <id>Q9CUL5-3</id>
        <name>3</name>
        <sequence type="described" ref="VSP_024333 VSP_024336 VSP_024337"/>
    </isoform>
</comment>
<comment type="similarity">
    <text evidence="5">Belongs to the AAA ATPase family. DRC11 subfamily.</text>
</comment>
<name>DRC11_MOUSE</name>
<sequence length="857" mass="99875">MSNLMYNKMWHQTQEALNSLLDKEFQKMSEPQANKVLVFQMLATFYINYVQIFRNMENVYDQIVHPQKRMLIRKVLDGVMGRILELKNEMVELEMTEFHYFDDILQDLKLSPQQLDVPIPRYFLKERLEVIKGREKILARILTECGLNLPVKYAAKSIALEEAVKLIQIAERARQGRLRALFMKQIFLQECRAKEMKLLGHRLLDTKLAALQIQKVWRGFHQCKKTVKEREEEMVFLGMKPSPLFNEVSDAIVQSKQVTNLRDEVQLKHEQDYQEALVNIKEDLKMLEGPDIKEHLQDQIRQWFIECRNLTGTFPDYPNEEDGGSALIFSNKTPEQVMGDIIATQEEEEKLKKKKKKEDKENKGKKGKKEKKEKKEKKVSLKEKAMKDEDEEWKMSPSLFLQLMEEGNSLYKDIWLNKDESWNFPQDYDPELIKEEKRKELEMEIRVQVDELMRQELKNLKLAVNREMEIPPRQKKGKKEQTIVFPREVFGNPRVALVSLHIRALWGISYLSFNNGTIESLYQELVEKGLLIQALKVNLSDYIGEYSYLGTTLRQVAIEPMPSLLDVRQLITLYGILPLGSAEVHERAPLVKSLLLAGPSGVGKKMLVHAICTETGANLFNLSALNIAGKYPGKTGLQMMIHLVFKVARQLQPSVVWIQDTEKTFYKKVPQAEKRFEPKRLKRYLPKLLKLLKPDDRILIVGTTHRPFDAELQPFCRVYQKIILVPRPDYASRYGKFHEVLWKEIILRNGGKLTNSLNISCLSKVTDGFTQGQIVQVIKDVLTERRLRQQAHKPLTAIEFITMMTNMNPVYREEEESFKNWYAKTPLGKKRVLSLTVGNKEKEKDKGKKGKRGKKKK</sequence>
<accession>Q9CUL5</accession>
<accession>Q3UT65</accession>
<accession>Q9D4P1</accession>
<feature type="chain" id="PRO_0000283573" description="Dynein regulatory complex protein 11">
    <location>
        <begin position="1"/>
        <end position="857"/>
    </location>
</feature>
<feature type="domain" description="IQ">
    <location>
        <begin position="206"/>
        <end position="235"/>
    </location>
</feature>
<feature type="region of interest" description="Disordered" evidence="3">
    <location>
        <begin position="348"/>
        <end position="388"/>
    </location>
</feature>
<feature type="region of interest" description="Disordered" evidence="3">
    <location>
        <begin position="834"/>
        <end position="857"/>
    </location>
</feature>
<feature type="compositionally biased region" description="Basic residues" evidence="3">
    <location>
        <begin position="365"/>
        <end position="375"/>
    </location>
</feature>
<feature type="compositionally biased region" description="Basic and acidic residues" evidence="3">
    <location>
        <begin position="376"/>
        <end position="387"/>
    </location>
</feature>
<feature type="compositionally biased region" description="Basic residues" evidence="3">
    <location>
        <begin position="847"/>
        <end position="857"/>
    </location>
</feature>
<feature type="binding site" evidence="2">
    <location>
        <begin position="598"/>
        <end position="605"/>
    </location>
    <ligand>
        <name>ATP</name>
        <dbReference type="ChEBI" id="CHEBI:30616"/>
    </ligand>
</feature>
<feature type="splice variant" id="VSP_024333" description="In isoform 3." evidence="5">
    <location>
        <begin position="1"/>
        <end position="394"/>
    </location>
</feature>
<feature type="splice variant" id="VSP_024334" description="In isoform 2." evidence="4">
    <original>NLTGT</original>
    <variation>LGCCS</variation>
    <location>
        <begin position="309"/>
        <end position="313"/>
    </location>
</feature>
<feature type="splice variant" id="VSP_024335" description="In isoform 2." evidence="4">
    <location>
        <begin position="314"/>
        <end position="857"/>
    </location>
</feature>
<feature type="splice variant" id="VSP_024336" description="In isoform 3." evidence="5">
    <original>EQTIVFPREVFGNPRVALVSLHIRALWGISYLSFNNG</original>
    <variation>KNKGRKGRRGKRGKKEKDLTADR</variation>
    <location>
        <begin position="480"/>
        <end position="516"/>
    </location>
</feature>
<feature type="splice variant" id="VSP_024337" description="In isoform 3." evidence="5">
    <location>
        <begin position="735"/>
        <end position="739"/>
    </location>
</feature>
<feature type="sequence conflict" description="In Ref. 1; BAB30202." evidence="5" ref="1">
    <original>Q</original>
    <variation>K</variation>
    <location>
        <position position="189"/>
    </location>
</feature>
<feature type="sequence conflict" description="In Ref. 1; BAB29877." evidence="5" ref="1">
    <original>K</original>
    <variation>R</variation>
    <location>
        <position position="353"/>
    </location>
</feature>
<keyword id="KW-0025">Alternative splicing</keyword>
<keyword id="KW-0067">ATP-binding</keyword>
<keyword id="KW-0966">Cell projection</keyword>
<keyword id="KW-0969">Cilium</keyword>
<keyword id="KW-0963">Cytoplasm</keyword>
<keyword id="KW-0206">Cytoskeleton</keyword>
<keyword id="KW-0282">Flagellum</keyword>
<keyword id="KW-0547">Nucleotide-binding</keyword>
<keyword id="KW-1185">Reference proteome</keyword>